<keyword id="KW-0131">Cell cycle</keyword>
<keyword id="KW-0132">Cell division</keyword>
<keyword id="KW-1185">Reference proteome</keyword>
<keyword id="KW-0717">Septation</keyword>
<gene>
    <name evidence="1" type="primary">minC</name>
    <name type="ordered locus">EUBELI_01000</name>
</gene>
<reference key="1">
    <citation type="journal article" date="2009" name="Proc. Natl. Acad. Sci. U.S.A.">
        <title>Characterizing a model human gut microbiota composed of members of its two dominant bacterial phyla.</title>
        <authorList>
            <person name="Mahowald M.A."/>
            <person name="Rey F.E."/>
            <person name="Seedorf H."/>
            <person name="Turnbaugh P.J."/>
            <person name="Fulton R.S."/>
            <person name="Wollam A."/>
            <person name="Shah N."/>
            <person name="Wang C."/>
            <person name="Magrini V."/>
            <person name="Wilson R.K."/>
            <person name="Cantarel B.L."/>
            <person name="Coutinho P.M."/>
            <person name="Henrissat B."/>
            <person name="Crock L.W."/>
            <person name="Russell A."/>
            <person name="Verberkmoes N.C."/>
            <person name="Hettich R.L."/>
            <person name="Gordon J.I."/>
        </authorList>
    </citation>
    <scope>NUCLEOTIDE SEQUENCE [LARGE SCALE GENOMIC DNA]</scope>
    <source>
        <strain>ATCC 27750 / DSM 3376 / VPI C15-48 / C15-B4</strain>
    </source>
</reference>
<sequence length="246" mass="26968">MNVLDNSVIIKGSKNGITVFLDEEMPFEELLENVSDKFKNASKFFNNATMAISFDGRNLSAEEEKRILNVISDVSELNIVCVLDENNDIKSVYEEAVKKAMNSFNISHQPERQKITDPKTTCMFYKGTLRSGQVFEADGSVVVLGDVNPGGKVVAKGSVIVLGSLKGNIFAGVDGNENAFVVALEMSPMQIKIGDIIARSSDSGVNKISKGKNKSKILEPKIAYVYDQNIYVEDLEQNALDDISLD</sequence>
<comment type="function">
    <text evidence="1">Cell division inhibitor that blocks the formation of polar Z ring septums. Rapidly oscillates between the poles of the cell to destabilize FtsZ filaments that have formed before they mature into polar Z rings. Prevents FtsZ polymerization.</text>
</comment>
<comment type="subunit">
    <text evidence="1">Interacts with MinD and FtsZ.</text>
</comment>
<comment type="similarity">
    <text evidence="1">Belongs to the MinC family.</text>
</comment>
<feature type="chain" id="PRO_1000204694" description="Probable septum site-determining protein MinC">
    <location>
        <begin position="1"/>
        <end position="246"/>
    </location>
</feature>
<dbReference type="EMBL" id="CP001104">
    <property type="protein sequence ID" value="ACR72001.1"/>
    <property type="molecule type" value="Genomic_DNA"/>
</dbReference>
<dbReference type="RefSeq" id="WP_012739236.1">
    <property type="nucleotide sequence ID" value="NC_012778.1"/>
</dbReference>
<dbReference type="SMR" id="C4Z088"/>
<dbReference type="STRING" id="515620.EUBELI_01000"/>
<dbReference type="GeneID" id="41355728"/>
<dbReference type="KEGG" id="eel:EUBELI_01000"/>
<dbReference type="eggNOG" id="COG0850">
    <property type="taxonomic scope" value="Bacteria"/>
</dbReference>
<dbReference type="HOGENOM" id="CLU_048711_2_2_9"/>
<dbReference type="Proteomes" id="UP000001476">
    <property type="component" value="Chromosome"/>
</dbReference>
<dbReference type="GO" id="GO:0000902">
    <property type="term" value="P:cell morphogenesis"/>
    <property type="evidence" value="ECO:0007669"/>
    <property type="project" value="InterPro"/>
</dbReference>
<dbReference type="GO" id="GO:0000917">
    <property type="term" value="P:division septum assembly"/>
    <property type="evidence" value="ECO:0007669"/>
    <property type="project" value="UniProtKB-KW"/>
</dbReference>
<dbReference type="GO" id="GO:1901891">
    <property type="term" value="P:regulation of cell septum assembly"/>
    <property type="evidence" value="ECO:0007669"/>
    <property type="project" value="InterPro"/>
</dbReference>
<dbReference type="Gene3D" id="2.160.20.70">
    <property type="match status" value="1"/>
</dbReference>
<dbReference type="Gene3D" id="3.30.160.540">
    <property type="match status" value="1"/>
</dbReference>
<dbReference type="HAMAP" id="MF_00267">
    <property type="entry name" value="MinC"/>
    <property type="match status" value="1"/>
</dbReference>
<dbReference type="InterPro" id="IPR016098">
    <property type="entry name" value="CAP/MinC_C"/>
</dbReference>
<dbReference type="InterPro" id="IPR013033">
    <property type="entry name" value="MinC"/>
</dbReference>
<dbReference type="InterPro" id="IPR036145">
    <property type="entry name" value="MinC_C_sf"/>
</dbReference>
<dbReference type="InterPro" id="IPR055219">
    <property type="entry name" value="MinC_N_1"/>
</dbReference>
<dbReference type="InterPro" id="IPR005526">
    <property type="entry name" value="Septum_form_inhib_MinC_C"/>
</dbReference>
<dbReference type="NCBIfam" id="TIGR01222">
    <property type="entry name" value="minC"/>
    <property type="match status" value="1"/>
</dbReference>
<dbReference type="PANTHER" id="PTHR34108">
    <property type="entry name" value="SEPTUM SITE-DETERMINING PROTEIN MINC"/>
    <property type="match status" value="1"/>
</dbReference>
<dbReference type="PANTHER" id="PTHR34108:SF1">
    <property type="entry name" value="SEPTUM SITE-DETERMINING PROTEIN MINC"/>
    <property type="match status" value="1"/>
</dbReference>
<dbReference type="Pfam" id="PF03775">
    <property type="entry name" value="MinC_C"/>
    <property type="match status" value="1"/>
</dbReference>
<dbReference type="Pfam" id="PF22642">
    <property type="entry name" value="MinC_N_1"/>
    <property type="match status" value="1"/>
</dbReference>
<dbReference type="SUPFAM" id="SSF63848">
    <property type="entry name" value="Cell-division inhibitor MinC, C-terminal domain"/>
    <property type="match status" value="1"/>
</dbReference>
<accession>C4Z088</accession>
<name>MINC_LACE2</name>
<organism>
    <name type="scientific">Lachnospira eligens (strain ATCC 27750 / DSM 3376 / VPI C15-48 / C15-B4)</name>
    <name type="common">Eubacterium eligens</name>
    <dbReference type="NCBI Taxonomy" id="515620"/>
    <lineage>
        <taxon>Bacteria</taxon>
        <taxon>Bacillati</taxon>
        <taxon>Bacillota</taxon>
        <taxon>Clostridia</taxon>
        <taxon>Lachnospirales</taxon>
        <taxon>Lachnospiraceae</taxon>
        <taxon>Lachnospira</taxon>
    </lineage>
</organism>
<evidence type="ECO:0000255" key="1">
    <source>
        <dbReference type="HAMAP-Rule" id="MF_00267"/>
    </source>
</evidence>
<protein>
    <recommendedName>
        <fullName evidence="1">Probable septum site-determining protein MinC</fullName>
    </recommendedName>
</protein>
<proteinExistence type="inferred from homology"/>